<evidence type="ECO:0000255" key="1"/>
<evidence type="ECO:0000255" key="2">
    <source>
        <dbReference type="PROSITE-ProRule" id="PRU00040"/>
    </source>
</evidence>
<evidence type="ECO:0000256" key="3">
    <source>
        <dbReference type="SAM" id="MobiDB-lite"/>
    </source>
</evidence>
<evidence type="ECO:0000305" key="4"/>
<evidence type="ECO:0000312" key="5">
    <source>
        <dbReference type="HGNC" id="HGNC:34521"/>
    </source>
</evidence>
<name>CL20A_HUMAN</name>
<accession>Q6ZU45</accession>
<accession>A0A1B0GWE9</accession>
<comment type="sequence caution" evidence="4">
    <conflict type="miscellaneous discrepancy">
        <sequence resource="EMBL-CDS" id="BAC86382"/>
    </conflict>
    <text>Probable cloning artifact.</text>
</comment>
<reference key="1">
    <citation type="journal article" date="2006" name="Nature">
        <title>The DNA sequence and biological annotation of human chromosome 1.</title>
        <authorList>
            <person name="Gregory S.G."/>
            <person name="Barlow K.F."/>
            <person name="McLay K.E."/>
            <person name="Kaul R."/>
            <person name="Swarbreck D."/>
            <person name="Dunham A."/>
            <person name="Scott C.E."/>
            <person name="Howe K.L."/>
            <person name="Woodfine K."/>
            <person name="Spencer C.C.A."/>
            <person name="Jones M.C."/>
            <person name="Gillson C."/>
            <person name="Searle S."/>
            <person name="Zhou Y."/>
            <person name="Kokocinski F."/>
            <person name="McDonald L."/>
            <person name="Evans R."/>
            <person name="Phillips K."/>
            <person name="Atkinson A."/>
            <person name="Cooper R."/>
            <person name="Jones C."/>
            <person name="Hall R.E."/>
            <person name="Andrews T.D."/>
            <person name="Lloyd C."/>
            <person name="Ainscough R."/>
            <person name="Almeida J.P."/>
            <person name="Ambrose K.D."/>
            <person name="Anderson F."/>
            <person name="Andrew R.W."/>
            <person name="Ashwell R.I.S."/>
            <person name="Aubin K."/>
            <person name="Babbage A.K."/>
            <person name="Bagguley C.L."/>
            <person name="Bailey J."/>
            <person name="Beasley H."/>
            <person name="Bethel G."/>
            <person name="Bird C.P."/>
            <person name="Bray-Allen S."/>
            <person name="Brown J.Y."/>
            <person name="Brown A.J."/>
            <person name="Buckley D."/>
            <person name="Burton J."/>
            <person name="Bye J."/>
            <person name="Carder C."/>
            <person name="Chapman J.C."/>
            <person name="Clark S.Y."/>
            <person name="Clarke G."/>
            <person name="Clee C."/>
            <person name="Cobley V."/>
            <person name="Collier R.E."/>
            <person name="Corby N."/>
            <person name="Coville G.J."/>
            <person name="Davies J."/>
            <person name="Deadman R."/>
            <person name="Dunn M."/>
            <person name="Earthrowl M."/>
            <person name="Ellington A.G."/>
            <person name="Errington H."/>
            <person name="Frankish A."/>
            <person name="Frankland J."/>
            <person name="French L."/>
            <person name="Garner P."/>
            <person name="Garnett J."/>
            <person name="Gay L."/>
            <person name="Ghori M.R.J."/>
            <person name="Gibson R."/>
            <person name="Gilby L.M."/>
            <person name="Gillett W."/>
            <person name="Glithero R.J."/>
            <person name="Grafham D.V."/>
            <person name="Griffiths C."/>
            <person name="Griffiths-Jones S."/>
            <person name="Grocock R."/>
            <person name="Hammond S."/>
            <person name="Harrison E.S.I."/>
            <person name="Hart E."/>
            <person name="Haugen E."/>
            <person name="Heath P.D."/>
            <person name="Holmes S."/>
            <person name="Holt K."/>
            <person name="Howden P.J."/>
            <person name="Hunt A.R."/>
            <person name="Hunt S.E."/>
            <person name="Hunter G."/>
            <person name="Isherwood J."/>
            <person name="James R."/>
            <person name="Johnson C."/>
            <person name="Johnson D."/>
            <person name="Joy A."/>
            <person name="Kay M."/>
            <person name="Kershaw J.K."/>
            <person name="Kibukawa M."/>
            <person name="Kimberley A.M."/>
            <person name="King A."/>
            <person name="Knights A.J."/>
            <person name="Lad H."/>
            <person name="Laird G."/>
            <person name="Lawlor S."/>
            <person name="Leongamornlert D.A."/>
            <person name="Lloyd D.M."/>
            <person name="Loveland J."/>
            <person name="Lovell J."/>
            <person name="Lush M.J."/>
            <person name="Lyne R."/>
            <person name="Martin S."/>
            <person name="Mashreghi-Mohammadi M."/>
            <person name="Matthews L."/>
            <person name="Matthews N.S.W."/>
            <person name="McLaren S."/>
            <person name="Milne S."/>
            <person name="Mistry S."/>
            <person name="Moore M.J.F."/>
            <person name="Nickerson T."/>
            <person name="O'Dell C.N."/>
            <person name="Oliver K."/>
            <person name="Palmeiri A."/>
            <person name="Palmer S.A."/>
            <person name="Parker A."/>
            <person name="Patel D."/>
            <person name="Pearce A.V."/>
            <person name="Peck A.I."/>
            <person name="Pelan S."/>
            <person name="Phelps K."/>
            <person name="Phillimore B.J."/>
            <person name="Plumb R."/>
            <person name="Rajan J."/>
            <person name="Raymond C."/>
            <person name="Rouse G."/>
            <person name="Saenphimmachak C."/>
            <person name="Sehra H.K."/>
            <person name="Sheridan E."/>
            <person name="Shownkeen R."/>
            <person name="Sims S."/>
            <person name="Skuce C.D."/>
            <person name="Smith M."/>
            <person name="Steward C."/>
            <person name="Subramanian S."/>
            <person name="Sycamore N."/>
            <person name="Tracey A."/>
            <person name="Tromans A."/>
            <person name="Van Helmond Z."/>
            <person name="Wall M."/>
            <person name="Wallis J.M."/>
            <person name="White S."/>
            <person name="Whitehead S.L."/>
            <person name="Wilkinson J.E."/>
            <person name="Willey D.L."/>
            <person name="Williams H."/>
            <person name="Wilming L."/>
            <person name="Wray P.W."/>
            <person name="Wu Z."/>
            <person name="Coulson A."/>
            <person name="Vaudin M."/>
            <person name="Sulston J.E."/>
            <person name="Durbin R.M."/>
            <person name="Hubbard T."/>
            <person name="Wooster R."/>
            <person name="Dunham I."/>
            <person name="Carter N.P."/>
            <person name="McVean G."/>
            <person name="Ross M.T."/>
            <person name="Harrow J."/>
            <person name="Olson M.V."/>
            <person name="Beck S."/>
            <person name="Rogers J."/>
            <person name="Bentley D.R."/>
        </authorList>
    </citation>
    <scope>NUCLEOTIDE SEQUENCE [LARGE SCALE GENOMIC DNA]</scope>
</reference>
<reference key="2">
    <citation type="journal article" date="2004" name="Nat. Genet.">
        <title>Complete sequencing and characterization of 21,243 full-length human cDNAs.</title>
        <authorList>
            <person name="Ota T."/>
            <person name="Suzuki Y."/>
            <person name="Nishikawa T."/>
            <person name="Otsuki T."/>
            <person name="Sugiyama T."/>
            <person name="Irie R."/>
            <person name="Wakamatsu A."/>
            <person name="Hayashi K."/>
            <person name="Sato H."/>
            <person name="Nagai K."/>
            <person name="Kimura K."/>
            <person name="Makita H."/>
            <person name="Sekine M."/>
            <person name="Obayashi M."/>
            <person name="Nishi T."/>
            <person name="Shibahara T."/>
            <person name="Tanaka T."/>
            <person name="Ishii S."/>
            <person name="Yamamoto J."/>
            <person name="Saito K."/>
            <person name="Kawai Y."/>
            <person name="Isono Y."/>
            <person name="Nakamura Y."/>
            <person name="Nagahari K."/>
            <person name="Murakami K."/>
            <person name="Yasuda T."/>
            <person name="Iwayanagi T."/>
            <person name="Wagatsuma M."/>
            <person name="Shiratori A."/>
            <person name="Sudo H."/>
            <person name="Hosoiri T."/>
            <person name="Kaku Y."/>
            <person name="Kodaira H."/>
            <person name="Kondo H."/>
            <person name="Sugawara M."/>
            <person name="Takahashi M."/>
            <person name="Kanda K."/>
            <person name="Yokoi T."/>
            <person name="Furuya T."/>
            <person name="Kikkawa E."/>
            <person name="Omura Y."/>
            <person name="Abe K."/>
            <person name="Kamihara K."/>
            <person name="Katsuta N."/>
            <person name="Sato K."/>
            <person name="Tanikawa M."/>
            <person name="Yamazaki M."/>
            <person name="Ninomiya K."/>
            <person name="Ishibashi T."/>
            <person name="Yamashita H."/>
            <person name="Murakawa K."/>
            <person name="Fujimori K."/>
            <person name="Tanai H."/>
            <person name="Kimata M."/>
            <person name="Watanabe M."/>
            <person name="Hiraoka S."/>
            <person name="Chiba Y."/>
            <person name="Ishida S."/>
            <person name="Ono Y."/>
            <person name="Takiguchi S."/>
            <person name="Watanabe S."/>
            <person name="Yosida M."/>
            <person name="Hotuta T."/>
            <person name="Kusano J."/>
            <person name="Kanehori K."/>
            <person name="Takahashi-Fujii A."/>
            <person name="Hara H."/>
            <person name="Tanase T.-O."/>
            <person name="Nomura Y."/>
            <person name="Togiya S."/>
            <person name="Komai F."/>
            <person name="Hara R."/>
            <person name="Takeuchi K."/>
            <person name="Arita M."/>
            <person name="Imose N."/>
            <person name="Musashino K."/>
            <person name="Yuuki H."/>
            <person name="Oshima A."/>
            <person name="Sasaki N."/>
            <person name="Aotsuka S."/>
            <person name="Yoshikawa Y."/>
            <person name="Matsunawa H."/>
            <person name="Ichihara T."/>
            <person name="Shiohata N."/>
            <person name="Sano S."/>
            <person name="Moriya S."/>
            <person name="Momiyama H."/>
            <person name="Satoh N."/>
            <person name="Takami S."/>
            <person name="Terashima Y."/>
            <person name="Suzuki O."/>
            <person name="Nakagawa S."/>
            <person name="Senoh A."/>
            <person name="Mizoguchi H."/>
            <person name="Goto Y."/>
            <person name="Shimizu F."/>
            <person name="Wakebe H."/>
            <person name="Hishigaki H."/>
            <person name="Watanabe T."/>
            <person name="Sugiyama A."/>
            <person name="Takemoto M."/>
            <person name="Kawakami B."/>
            <person name="Yamazaki M."/>
            <person name="Watanabe K."/>
            <person name="Kumagai A."/>
            <person name="Itakura S."/>
            <person name="Fukuzumi Y."/>
            <person name="Fujimori Y."/>
            <person name="Komiyama M."/>
            <person name="Tashiro H."/>
            <person name="Tanigami A."/>
            <person name="Fujiwara T."/>
            <person name="Ono T."/>
            <person name="Yamada K."/>
            <person name="Fujii Y."/>
            <person name="Ozaki K."/>
            <person name="Hirao M."/>
            <person name="Ohmori Y."/>
            <person name="Kawabata A."/>
            <person name="Hikiji T."/>
            <person name="Kobatake N."/>
            <person name="Inagaki H."/>
            <person name="Ikema Y."/>
            <person name="Okamoto S."/>
            <person name="Okitani R."/>
            <person name="Kawakami T."/>
            <person name="Noguchi S."/>
            <person name="Itoh T."/>
            <person name="Shigeta K."/>
            <person name="Senba T."/>
            <person name="Matsumura K."/>
            <person name="Nakajima Y."/>
            <person name="Mizuno T."/>
            <person name="Morinaga M."/>
            <person name="Sasaki M."/>
            <person name="Togashi T."/>
            <person name="Oyama M."/>
            <person name="Hata H."/>
            <person name="Watanabe M."/>
            <person name="Komatsu T."/>
            <person name="Mizushima-Sugano J."/>
            <person name="Satoh T."/>
            <person name="Shirai Y."/>
            <person name="Takahashi Y."/>
            <person name="Nakagawa K."/>
            <person name="Okumura K."/>
            <person name="Nagase T."/>
            <person name="Nomura N."/>
            <person name="Kikuchi H."/>
            <person name="Masuho Y."/>
            <person name="Yamashita R."/>
            <person name="Nakai K."/>
            <person name="Yada T."/>
            <person name="Nakamura Y."/>
            <person name="Ohara O."/>
            <person name="Isogai T."/>
            <person name="Sugano S."/>
        </authorList>
    </citation>
    <scope>PARTIAL NUCLEOTIDE SEQUENCE [LARGE SCALE MRNA]</scope>
    <source>
        <tissue>Testis</tissue>
    </source>
</reference>
<sequence length="400" mass="44255">MLPRALLLSFCAAALQLVSSKRDLVLVKEALSWYDAQQHCRLHYTDLADLQPSGLWKLYSLMTSTPAWIGLFFDASTSGLRWSSGSTFTALEWGQKLPEFGVGFCATLYTWLKLPSIGAASCTAQKPFLCYCDPDVGHLISTKPSLSLTTSPKPAVVQISGQTFMRFDQVMTWSSALLYCRSHHTDLADLQMVTDETGKEALRSIMSETEAWIGLYLNANSGSLSWSSDLGASIPSWLQVPMMVRGLCTALGIYMTYSPKVYSVNCSSLLPFFCFYDSSTGHRASAELPPLFHTSPTEMTEETTPRPGRAVASVGSGTDRRDTAAATEAQHLSSESKEKTSAQKSGHPFGILKADFTISTLMDPEEMKDQFLRQIQEVLKLTLGHEQFRLKWVSFEVNKK</sequence>
<protein>
    <recommendedName>
        <fullName>Putative C-type lectin domain family 20 member A</fullName>
    </recommendedName>
</protein>
<keyword id="KW-1015">Disulfide bond</keyword>
<keyword id="KW-0430">Lectin</keyword>
<keyword id="KW-1185">Reference proteome</keyword>
<keyword id="KW-0677">Repeat</keyword>
<keyword id="KW-0732">Signal</keyword>
<dbReference type="EMBL" id="AL035702">
    <property type="status" value="NOT_ANNOTATED_CDS"/>
    <property type="molecule type" value="Genomic_DNA"/>
</dbReference>
<dbReference type="EMBL" id="AL513013">
    <property type="status" value="NOT_ANNOTATED_CDS"/>
    <property type="molecule type" value="Genomic_DNA"/>
</dbReference>
<dbReference type="EMBL" id="KF455100">
    <property type="status" value="NOT_ANNOTATED_CDS"/>
    <property type="molecule type" value="Genomic_DNA"/>
</dbReference>
<dbReference type="EMBL" id="AK125993">
    <property type="protein sequence ID" value="BAC86382.1"/>
    <property type="status" value="ALT_SEQ"/>
    <property type="molecule type" value="mRNA"/>
</dbReference>
<dbReference type="CCDS" id="CCDS91118.1"/>
<dbReference type="RefSeq" id="NP_001382260.1">
    <property type="nucleotide sequence ID" value="NM_001395331.1"/>
</dbReference>
<dbReference type="SMR" id="Q6ZU45"/>
<dbReference type="BioMuta" id="CLEC20A"/>
<dbReference type="DMDM" id="74723026"/>
<dbReference type="jPOST" id="Q6ZU45"/>
<dbReference type="Ensembl" id="ENST00000623247.3">
    <property type="protein sequence ID" value="ENSP00000490899.1"/>
    <property type="gene ID" value="ENSG00000188585.10"/>
</dbReference>
<dbReference type="GeneID" id="400797"/>
<dbReference type="MANE-Select" id="ENST00000623247.3">
    <property type="protein sequence ID" value="ENSP00000490899.1"/>
    <property type="RefSeq nucleotide sequence ID" value="NM_001395331.1"/>
    <property type="RefSeq protein sequence ID" value="NP_001382260.1"/>
</dbReference>
<dbReference type="AGR" id="HGNC:34521"/>
<dbReference type="GeneCards" id="CLEC20A"/>
<dbReference type="HGNC" id="HGNC:34521">
    <property type="gene designation" value="CLEC20A"/>
</dbReference>
<dbReference type="HPA" id="ENSG00000188585">
    <property type="expression patterns" value="Tissue enhanced (lymphoid tissue, testis)"/>
</dbReference>
<dbReference type="neXtProt" id="NX_Q6ZU45"/>
<dbReference type="OpenTargets" id="ENSG00000188585"/>
<dbReference type="VEuPathDB" id="HostDB:ENSG00000188585"/>
<dbReference type="GeneTree" id="ENSGT00390000009002"/>
<dbReference type="InParanoid" id="Q6ZU45"/>
<dbReference type="OMA" id="TALEWGQ"/>
<dbReference type="OrthoDB" id="6369810at2759"/>
<dbReference type="PAN-GO" id="Q6ZU45">
    <property type="GO annotations" value="0 GO annotations based on evolutionary models"/>
</dbReference>
<dbReference type="PhylomeDB" id="Q6ZU45"/>
<dbReference type="Pharos" id="Q6ZU45">
    <property type="development level" value="Tdark"/>
</dbReference>
<dbReference type="PRO" id="PR:Q6ZU45"/>
<dbReference type="Proteomes" id="UP000005640">
    <property type="component" value="Chromosome 1"/>
</dbReference>
<dbReference type="RNAct" id="Q6ZU45">
    <property type="molecule type" value="protein"/>
</dbReference>
<dbReference type="Bgee" id="ENSG00000188585">
    <property type="expression patterns" value="Expressed in male germ line stem cell (sensu Vertebrata) in testis and 37 other cell types or tissues"/>
</dbReference>
<dbReference type="ExpressionAtlas" id="Q6ZU45">
    <property type="expression patterns" value="baseline and differential"/>
</dbReference>
<dbReference type="GO" id="GO:0030246">
    <property type="term" value="F:carbohydrate binding"/>
    <property type="evidence" value="ECO:0007669"/>
    <property type="project" value="UniProtKB-KW"/>
</dbReference>
<dbReference type="CDD" id="cd03602">
    <property type="entry name" value="CLECT_1"/>
    <property type="match status" value="1"/>
</dbReference>
<dbReference type="Gene3D" id="3.10.100.10">
    <property type="entry name" value="Mannose-Binding Protein A, subunit A"/>
    <property type="match status" value="2"/>
</dbReference>
<dbReference type="InterPro" id="IPR001304">
    <property type="entry name" value="C-type_lectin-like"/>
</dbReference>
<dbReference type="InterPro" id="IPR016186">
    <property type="entry name" value="C-type_lectin-like/link_sf"/>
</dbReference>
<dbReference type="InterPro" id="IPR016187">
    <property type="entry name" value="CTDL_fold"/>
</dbReference>
<dbReference type="PANTHER" id="PTHR45784">
    <property type="entry name" value="C-TYPE LECTIN DOMAIN FAMILY 20 MEMBER A-RELATED"/>
    <property type="match status" value="1"/>
</dbReference>
<dbReference type="PANTHER" id="PTHR45784:SF5">
    <property type="entry name" value="C-TYPE LECTIN DOMAIN FAMILY 20 MEMBER A-RELATED"/>
    <property type="match status" value="1"/>
</dbReference>
<dbReference type="Pfam" id="PF00059">
    <property type="entry name" value="Lectin_C"/>
    <property type="match status" value="2"/>
</dbReference>
<dbReference type="SMART" id="SM00034">
    <property type="entry name" value="CLECT"/>
    <property type="match status" value="2"/>
</dbReference>
<dbReference type="SUPFAM" id="SSF56436">
    <property type="entry name" value="C-type lectin-like"/>
    <property type="match status" value="2"/>
</dbReference>
<dbReference type="PROSITE" id="PS50041">
    <property type="entry name" value="C_TYPE_LECTIN_2"/>
    <property type="match status" value="2"/>
</dbReference>
<proteinExistence type="evidence at transcript level"/>
<feature type="signal peptide" evidence="1">
    <location>
        <begin position="1"/>
        <end position="20"/>
    </location>
</feature>
<feature type="chain" id="PRO_5008408763" description="Putative C-type lectin domain family 20 member A" evidence="1">
    <location>
        <begin position="21"/>
        <end position="400"/>
    </location>
</feature>
<feature type="domain" description="C-type lectin 1" evidence="2">
    <location>
        <begin position="26"/>
        <end position="131"/>
    </location>
</feature>
<feature type="domain" description="C-type lectin 2" evidence="2">
    <location>
        <begin position="159"/>
        <end position="275"/>
    </location>
</feature>
<feature type="region of interest" description="Disordered" evidence="3">
    <location>
        <begin position="287"/>
        <end position="346"/>
    </location>
</feature>
<feature type="disulfide bond" evidence="2">
    <location>
        <begin position="40"/>
        <end position="130"/>
    </location>
</feature>
<feature type="disulfide bond" evidence="2">
    <location>
        <begin position="105"/>
        <end position="122"/>
    </location>
</feature>
<feature type="disulfide bond" evidence="2">
    <location>
        <begin position="180"/>
        <end position="274"/>
    </location>
</feature>
<feature type="disulfide bond" evidence="2">
    <location>
        <begin position="248"/>
        <end position="266"/>
    </location>
</feature>
<gene>
    <name evidence="5" type="primary">CLEC20A</name>
</gene>
<organism>
    <name type="scientific">Homo sapiens</name>
    <name type="common">Human</name>
    <dbReference type="NCBI Taxonomy" id="9606"/>
    <lineage>
        <taxon>Eukaryota</taxon>
        <taxon>Metazoa</taxon>
        <taxon>Chordata</taxon>
        <taxon>Craniata</taxon>
        <taxon>Vertebrata</taxon>
        <taxon>Euteleostomi</taxon>
        <taxon>Mammalia</taxon>
        <taxon>Eutheria</taxon>
        <taxon>Euarchontoglires</taxon>
        <taxon>Primates</taxon>
        <taxon>Haplorrhini</taxon>
        <taxon>Catarrhini</taxon>
        <taxon>Hominidae</taxon>
        <taxon>Homo</taxon>
    </lineage>
</organism>